<gene>
    <name evidence="9" type="primary">EFR3B</name>
    <name evidence="6" type="synonym">KIAA0953</name>
</gene>
<keyword id="KW-0025">Alternative splicing</keyword>
<keyword id="KW-1003">Cell membrane</keyword>
<keyword id="KW-0963">Cytoplasm</keyword>
<keyword id="KW-0449">Lipoprotein</keyword>
<keyword id="KW-0472">Membrane</keyword>
<keyword id="KW-0564">Palmitate</keyword>
<keyword id="KW-0597">Phosphoprotein</keyword>
<keyword id="KW-1267">Proteomics identification</keyword>
<keyword id="KW-1185">Reference proteome</keyword>
<dbReference type="EMBL" id="AB023170">
    <property type="protein sequence ID" value="BAA76797.1"/>
    <property type="status" value="ALT_INIT"/>
    <property type="molecule type" value="mRNA"/>
</dbReference>
<dbReference type="EMBL" id="AC012457">
    <property type="protein sequence ID" value="AAY24353.1"/>
    <property type="molecule type" value="Genomic_DNA"/>
</dbReference>
<dbReference type="EMBL" id="AC013267">
    <property type="status" value="NOT_ANNOTATED_CDS"/>
    <property type="molecule type" value="Genomic_DNA"/>
</dbReference>
<dbReference type="EMBL" id="CH471053">
    <property type="protein sequence ID" value="EAX00733.1"/>
    <property type="molecule type" value="Genomic_DNA"/>
</dbReference>
<dbReference type="EMBL" id="BC049384">
    <property type="protein sequence ID" value="AAH49384.1"/>
    <property type="molecule type" value="mRNA"/>
</dbReference>
<dbReference type="CCDS" id="CCDS46231.1">
    <molecule id="Q9Y2G0-1"/>
</dbReference>
<dbReference type="RefSeq" id="NP_055786.1">
    <molecule id="Q9Y2G0-1"/>
    <property type="nucleotide sequence ID" value="NM_014971.2"/>
</dbReference>
<dbReference type="BioGRID" id="116628">
    <property type="interactions" value="72"/>
</dbReference>
<dbReference type="FunCoup" id="Q9Y2G0">
    <property type="interactions" value="1647"/>
</dbReference>
<dbReference type="IntAct" id="Q9Y2G0">
    <property type="interactions" value="21"/>
</dbReference>
<dbReference type="MINT" id="Q9Y2G0"/>
<dbReference type="STRING" id="9606.ENSP00000384081"/>
<dbReference type="GlyGen" id="Q9Y2G0">
    <property type="glycosylation" value="3 sites, 1 O-linked glycan (2 sites)"/>
</dbReference>
<dbReference type="iPTMnet" id="Q9Y2G0"/>
<dbReference type="PhosphoSitePlus" id="Q9Y2G0"/>
<dbReference type="SwissPalm" id="Q9Y2G0"/>
<dbReference type="BioMuta" id="EFR3B"/>
<dbReference type="DMDM" id="162416214"/>
<dbReference type="jPOST" id="Q9Y2G0"/>
<dbReference type="MassIVE" id="Q9Y2G0"/>
<dbReference type="PaxDb" id="9606-ENSP00000384081"/>
<dbReference type="PeptideAtlas" id="Q9Y2G0"/>
<dbReference type="ProteomicsDB" id="85756">
    <molecule id="Q9Y2G0-1"/>
</dbReference>
<dbReference type="ProteomicsDB" id="85757">
    <molecule id="Q9Y2G0-2"/>
</dbReference>
<dbReference type="ProteomicsDB" id="85758">
    <molecule id="Q9Y2G0-3"/>
</dbReference>
<dbReference type="Pumba" id="Q9Y2G0"/>
<dbReference type="Antibodypedia" id="51573">
    <property type="antibodies" value="62 antibodies from 13 providers"/>
</dbReference>
<dbReference type="DNASU" id="22979"/>
<dbReference type="Ensembl" id="ENST00000401432.7">
    <molecule id="Q9Y2G0-3"/>
    <property type="protein sequence ID" value="ENSP00000386082.3"/>
    <property type="gene ID" value="ENSG00000084710.14"/>
</dbReference>
<dbReference type="Ensembl" id="ENST00000403714.8">
    <molecule id="Q9Y2G0-1"/>
    <property type="protein sequence ID" value="ENSP00000384081.3"/>
    <property type="gene ID" value="ENSG00000084710.14"/>
</dbReference>
<dbReference type="Ensembl" id="ENST00000405108.5">
    <molecule id="Q9Y2G0-2"/>
    <property type="protein sequence ID" value="ENSP00000384454.1"/>
    <property type="gene ID" value="ENSG00000084710.14"/>
</dbReference>
<dbReference type="GeneID" id="22979"/>
<dbReference type="KEGG" id="hsa:22979"/>
<dbReference type="MANE-Select" id="ENST00000403714.8">
    <property type="protein sequence ID" value="ENSP00000384081.3"/>
    <property type="RefSeq nucleotide sequence ID" value="NM_014971.2"/>
    <property type="RefSeq protein sequence ID" value="NP_055786.1"/>
</dbReference>
<dbReference type="UCSC" id="uc002rfw.3">
    <molecule id="Q9Y2G0-1"/>
    <property type="organism name" value="human"/>
</dbReference>
<dbReference type="AGR" id="HGNC:29155"/>
<dbReference type="CTD" id="22979"/>
<dbReference type="DisGeNET" id="22979"/>
<dbReference type="GeneCards" id="EFR3B"/>
<dbReference type="HGNC" id="HGNC:29155">
    <property type="gene designation" value="EFR3B"/>
</dbReference>
<dbReference type="HPA" id="ENSG00000084710">
    <property type="expression patterns" value="Tissue enhanced (brain, skeletal muscle)"/>
</dbReference>
<dbReference type="neXtProt" id="NX_Q9Y2G0"/>
<dbReference type="OpenTargets" id="ENSG00000084710"/>
<dbReference type="PharmGKB" id="PA162384473"/>
<dbReference type="VEuPathDB" id="HostDB:ENSG00000084710"/>
<dbReference type="eggNOG" id="KOG1877">
    <property type="taxonomic scope" value="Eukaryota"/>
</dbReference>
<dbReference type="GeneTree" id="ENSGT00390000002143"/>
<dbReference type="HOGENOM" id="CLU_012674_1_0_1"/>
<dbReference type="InParanoid" id="Q9Y2G0"/>
<dbReference type="OMA" id="VGTKYQT"/>
<dbReference type="OrthoDB" id="19232at2759"/>
<dbReference type="PAN-GO" id="Q9Y2G0">
    <property type="GO annotations" value="2 GO annotations based on evolutionary models"/>
</dbReference>
<dbReference type="PhylomeDB" id="Q9Y2G0"/>
<dbReference type="TreeFam" id="TF314098"/>
<dbReference type="PathwayCommons" id="Q9Y2G0"/>
<dbReference type="SignaLink" id="Q9Y2G0"/>
<dbReference type="SIGNOR" id="Q9Y2G0"/>
<dbReference type="BioGRID-ORCS" id="22979">
    <property type="hits" value="8 hits in 1141 CRISPR screens"/>
</dbReference>
<dbReference type="CD-CODE" id="FB4E32DD">
    <property type="entry name" value="Presynaptic clusters and postsynaptic densities"/>
</dbReference>
<dbReference type="ChiTaRS" id="EFR3B">
    <property type="organism name" value="human"/>
</dbReference>
<dbReference type="GenomeRNAi" id="22979"/>
<dbReference type="Pharos" id="Q9Y2G0">
    <property type="development level" value="Tbio"/>
</dbReference>
<dbReference type="PRO" id="PR:Q9Y2G0"/>
<dbReference type="Proteomes" id="UP000005640">
    <property type="component" value="Chromosome 2"/>
</dbReference>
<dbReference type="RNAct" id="Q9Y2G0">
    <property type="molecule type" value="protein"/>
</dbReference>
<dbReference type="Bgee" id="ENSG00000084710">
    <property type="expression patterns" value="Expressed in pons and 142 other cell types or tissues"/>
</dbReference>
<dbReference type="ExpressionAtlas" id="Q9Y2G0">
    <property type="expression patterns" value="baseline and differential"/>
</dbReference>
<dbReference type="GO" id="GO:0015629">
    <property type="term" value="C:actin cytoskeleton"/>
    <property type="evidence" value="ECO:0000314"/>
    <property type="project" value="HPA"/>
</dbReference>
<dbReference type="GO" id="GO:0005829">
    <property type="term" value="C:cytosol"/>
    <property type="evidence" value="ECO:0000314"/>
    <property type="project" value="HPA"/>
</dbReference>
<dbReference type="GO" id="GO:0005886">
    <property type="term" value="C:plasma membrane"/>
    <property type="evidence" value="ECO:0000314"/>
    <property type="project" value="HPA"/>
</dbReference>
<dbReference type="GO" id="GO:0046854">
    <property type="term" value="P:phosphatidylinositol phosphate biosynthetic process"/>
    <property type="evidence" value="ECO:0000314"/>
    <property type="project" value="UniProtKB"/>
</dbReference>
<dbReference type="GO" id="GO:0072659">
    <property type="term" value="P:protein localization to plasma membrane"/>
    <property type="evidence" value="ECO:0000314"/>
    <property type="project" value="UniProtKB"/>
</dbReference>
<dbReference type="GO" id="GO:0035176">
    <property type="term" value="P:social behavior"/>
    <property type="evidence" value="ECO:0007669"/>
    <property type="project" value="Ensembl"/>
</dbReference>
<dbReference type="GO" id="GO:0019226">
    <property type="term" value="P:transmission of nerve impulse"/>
    <property type="evidence" value="ECO:0007669"/>
    <property type="project" value="Ensembl"/>
</dbReference>
<dbReference type="FunFam" id="1.25.10.10:FF:000139">
    <property type="entry name" value="protein EFR3 homolog B"/>
    <property type="match status" value="1"/>
</dbReference>
<dbReference type="Gene3D" id="1.25.10.10">
    <property type="entry name" value="Leucine-rich Repeat Variant"/>
    <property type="match status" value="1"/>
</dbReference>
<dbReference type="InterPro" id="IPR011989">
    <property type="entry name" value="ARM-like"/>
</dbReference>
<dbReference type="InterPro" id="IPR016024">
    <property type="entry name" value="ARM-type_fold"/>
</dbReference>
<dbReference type="InterPro" id="IPR049152">
    <property type="entry name" value="EFR3-like_ARM"/>
</dbReference>
<dbReference type="InterPro" id="IPR051851">
    <property type="entry name" value="EFR3_Homologs"/>
</dbReference>
<dbReference type="PANTHER" id="PTHR12444:SF4">
    <property type="entry name" value="PROTEIN EFR3 HOMOLOG B"/>
    <property type="match status" value="1"/>
</dbReference>
<dbReference type="PANTHER" id="PTHR12444">
    <property type="entry name" value="PROTEIN EFR3 HOMOLOG CMP44E"/>
    <property type="match status" value="1"/>
</dbReference>
<dbReference type="Pfam" id="PF21052">
    <property type="entry name" value="EFR3_ARM"/>
    <property type="match status" value="1"/>
</dbReference>
<dbReference type="SUPFAM" id="SSF48371">
    <property type="entry name" value="ARM repeat"/>
    <property type="match status" value="1"/>
</dbReference>
<accession>Q9Y2G0</accession>
<accession>B7WPL8</accession>
<accession>Q86XU6</accession>
<comment type="function">
    <text evidence="2 3 4 5 8">Component of a complex required to localize phosphatidylinositol 4-kinase (PI4K) to the plasma membrane (PubMed:23229899, PubMed:25608530, PubMed:26571211). The complex acts as a regulator of phosphatidylinositol 4-phosphate (PtdIns(4)P) synthesis (Probable). In the complex, EFR3B probably acts as the membrane-anchoring component (PubMed:23229899). Also involved in responsiveness to G-protein-coupled receptors; it is however unclear whether this role is direct or indirect (PubMed:25380825).</text>
</comment>
<comment type="subunit">
    <text evidence="2 4 5">Component of a phosphatidylinositol 4-kinase (PI4K) complex, composed of PI4KA, EFR3 (EFR3A or EFR3B), TTC7 (TTC7A or TTC7B) and HYCC (HYCC1 or HYCC2).</text>
</comment>
<comment type="subcellular location">
    <subcellularLocation>
        <location evidence="2 3">Cell membrane</location>
        <topology evidence="2 3">Lipid-anchor</topology>
    </subcellularLocation>
    <subcellularLocation>
        <location evidence="3">Cytoplasm</location>
        <location evidence="3">Cytosol</location>
    </subcellularLocation>
    <text evidence="2 3">Palmitoylation anchors the protein to the plasma membrane (PubMed:23229899, PubMed:25380825). A small amount is observed in the cytosol (PubMed:25380825).</text>
</comment>
<comment type="alternative products">
    <event type="alternative splicing"/>
    <isoform>
        <id>Q9Y2G0-1</id>
        <name>1</name>
        <sequence type="displayed"/>
    </isoform>
    <isoform>
        <id>Q9Y2G0-2</id>
        <name>2</name>
        <sequence type="described" ref="VSP_029806"/>
    </isoform>
    <isoform>
        <id>Q9Y2G0-3</id>
        <name>3</name>
        <sequence type="described" ref="VSP_029807"/>
    </isoform>
</comment>
<comment type="PTM">
    <text evidence="2 3">Palmitoylated at its N-terminus, anchoring the protein to the plasma membrane.</text>
</comment>
<comment type="similarity">
    <text evidence="8">Belongs to the EFR3 family.</text>
</comment>
<comment type="sequence caution" evidence="8">
    <conflict type="erroneous initiation">
        <sequence resource="EMBL-CDS" id="BAA76797"/>
    </conflict>
    <text>Extended N-terminus.</text>
</comment>
<proteinExistence type="evidence at protein level"/>
<name>EFR3B_HUMAN</name>
<sequence length="817" mass="92487">MYGVCGCCGALRPRYKRLVDNIFPEDPEDGLVKTNMEKLTFYALSAPEKLDRIGAYLSERLIRDVGRHRYGYVCIAMEALDQLLMACHCQSINLFVESFLKMVAKLLESEKPNLQILGTNSFVKFANIEEDTPSYHRSYDFFVSRFSEMCHSSHDDLEIKTKIRMSGIKGLQGVVRKTVNDELQANIWDPQHMDKIVPSLLFNLQHVEEAESRSPSPLQAPEKEKESPAELAERCLRELLGRAAFGNIKNAIKPVLIHLDNHSLWEPKVFAIRCFKIIMYSIQPQHSHLVIQQLLGHLDANSRSAATVRAGIVEVLSEAAVIAATGSVGPTVLEMFNTLLRQLRLSIDYALTGSYDGAVSLGTKIIKEHEERMFQEAVIKTVGSFASTLPTYQRSEVILFIMSKVPRPSLHQAVDTGRTGENRNRLTQIMLLKSLLQVSTGFQCNNMMSALPSNFLDRLLSTALMEDAEIRLFVLEILISFIDRHGNRHKFSTISTLSDISVLKLKVDKCSRQDTVFMKKHSQQLYRHIYLSCKEETNVQKHYEALYGLLALISIELANEEVVVDLIRLVLAVQDVAQVNEENLPVYNRCALYALGAAYLNLISQLTTVPAFCQHIHEVIETRKKEAPYMLPEDVFVERPRLSQNLDGVVIELLFRQSKISEVLGGSGYNSDRLCLPYIPQLTDEDRLSKRRSIGETISLQVEVESRNSPEKEERVPAEEITYETLKKAIVDSVAVEEQERERRRQVVEKFQKAPFEEIAAHCGARASLLQSKLNQIFEITIRPPPSPSGTITAAYGQPQNHSIPVYEMKFPDLCVY</sequence>
<reference key="1">
    <citation type="journal article" date="1999" name="DNA Res.">
        <title>Prediction of the coding sequences of unidentified human genes. XIII. The complete sequences of 100 new cDNA clones from brain which code for large proteins in vitro.</title>
        <authorList>
            <person name="Nagase T."/>
            <person name="Ishikawa K."/>
            <person name="Suyama M."/>
            <person name="Kikuno R."/>
            <person name="Hirosawa M."/>
            <person name="Miyajima N."/>
            <person name="Tanaka A."/>
            <person name="Kotani H."/>
            <person name="Nomura N."/>
            <person name="Ohara O."/>
        </authorList>
    </citation>
    <scope>NUCLEOTIDE SEQUENCE [LARGE SCALE MRNA] (ISOFORM 3)</scope>
    <source>
        <tissue>Brain</tissue>
    </source>
</reference>
<reference key="2">
    <citation type="journal article" date="2005" name="Nature">
        <title>Generation and annotation of the DNA sequences of human chromosomes 2 and 4.</title>
        <authorList>
            <person name="Hillier L.W."/>
            <person name="Graves T.A."/>
            <person name="Fulton R.S."/>
            <person name="Fulton L.A."/>
            <person name="Pepin K.H."/>
            <person name="Minx P."/>
            <person name="Wagner-McPherson C."/>
            <person name="Layman D."/>
            <person name="Wylie K."/>
            <person name="Sekhon M."/>
            <person name="Becker M.C."/>
            <person name="Fewell G.A."/>
            <person name="Delehaunty K.D."/>
            <person name="Miner T.L."/>
            <person name="Nash W.E."/>
            <person name="Kremitzki C."/>
            <person name="Oddy L."/>
            <person name="Du H."/>
            <person name="Sun H."/>
            <person name="Bradshaw-Cordum H."/>
            <person name="Ali J."/>
            <person name="Carter J."/>
            <person name="Cordes M."/>
            <person name="Harris A."/>
            <person name="Isak A."/>
            <person name="van Brunt A."/>
            <person name="Nguyen C."/>
            <person name="Du F."/>
            <person name="Courtney L."/>
            <person name="Kalicki J."/>
            <person name="Ozersky P."/>
            <person name="Abbott S."/>
            <person name="Armstrong J."/>
            <person name="Belter E.A."/>
            <person name="Caruso L."/>
            <person name="Cedroni M."/>
            <person name="Cotton M."/>
            <person name="Davidson T."/>
            <person name="Desai A."/>
            <person name="Elliott G."/>
            <person name="Erb T."/>
            <person name="Fronick C."/>
            <person name="Gaige T."/>
            <person name="Haakenson W."/>
            <person name="Haglund K."/>
            <person name="Holmes A."/>
            <person name="Harkins R."/>
            <person name="Kim K."/>
            <person name="Kruchowski S.S."/>
            <person name="Strong C.M."/>
            <person name="Grewal N."/>
            <person name="Goyea E."/>
            <person name="Hou S."/>
            <person name="Levy A."/>
            <person name="Martinka S."/>
            <person name="Mead K."/>
            <person name="McLellan M.D."/>
            <person name="Meyer R."/>
            <person name="Randall-Maher J."/>
            <person name="Tomlinson C."/>
            <person name="Dauphin-Kohlberg S."/>
            <person name="Kozlowicz-Reilly A."/>
            <person name="Shah N."/>
            <person name="Swearengen-Shahid S."/>
            <person name="Snider J."/>
            <person name="Strong J.T."/>
            <person name="Thompson J."/>
            <person name="Yoakum M."/>
            <person name="Leonard S."/>
            <person name="Pearman C."/>
            <person name="Trani L."/>
            <person name="Radionenko M."/>
            <person name="Waligorski J.E."/>
            <person name="Wang C."/>
            <person name="Rock S.M."/>
            <person name="Tin-Wollam A.-M."/>
            <person name="Maupin R."/>
            <person name="Latreille P."/>
            <person name="Wendl M.C."/>
            <person name="Yang S.-P."/>
            <person name="Pohl C."/>
            <person name="Wallis J.W."/>
            <person name="Spieth J."/>
            <person name="Bieri T.A."/>
            <person name="Berkowicz N."/>
            <person name="Nelson J.O."/>
            <person name="Osborne J."/>
            <person name="Ding L."/>
            <person name="Meyer R."/>
            <person name="Sabo A."/>
            <person name="Shotland Y."/>
            <person name="Sinha P."/>
            <person name="Wohldmann P.E."/>
            <person name="Cook L.L."/>
            <person name="Hickenbotham M.T."/>
            <person name="Eldred J."/>
            <person name="Williams D."/>
            <person name="Jones T.A."/>
            <person name="She X."/>
            <person name="Ciccarelli F.D."/>
            <person name="Izaurralde E."/>
            <person name="Taylor J."/>
            <person name="Schmutz J."/>
            <person name="Myers R.M."/>
            <person name="Cox D.R."/>
            <person name="Huang X."/>
            <person name="McPherson J.D."/>
            <person name="Mardis E.R."/>
            <person name="Clifton S.W."/>
            <person name="Warren W.C."/>
            <person name="Chinwalla A.T."/>
            <person name="Eddy S.R."/>
            <person name="Marra M.A."/>
            <person name="Ovcharenko I."/>
            <person name="Furey T.S."/>
            <person name="Miller W."/>
            <person name="Eichler E.E."/>
            <person name="Bork P."/>
            <person name="Suyama M."/>
            <person name="Torrents D."/>
            <person name="Waterston R.H."/>
            <person name="Wilson R.K."/>
        </authorList>
    </citation>
    <scope>NUCLEOTIDE SEQUENCE [LARGE SCALE GENOMIC DNA]</scope>
</reference>
<reference key="3">
    <citation type="submission" date="2005-09" db="EMBL/GenBank/DDBJ databases">
        <authorList>
            <person name="Mural R.J."/>
            <person name="Istrail S."/>
            <person name="Sutton G.G."/>
            <person name="Florea L."/>
            <person name="Halpern A.L."/>
            <person name="Mobarry C.M."/>
            <person name="Lippert R."/>
            <person name="Walenz B."/>
            <person name="Shatkay H."/>
            <person name="Dew I."/>
            <person name="Miller J.R."/>
            <person name="Flanigan M.J."/>
            <person name="Edwards N.J."/>
            <person name="Bolanos R."/>
            <person name="Fasulo D."/>
            <person name="Halldorsson B.V."/>
            <person name="Hannenhalli S."/>
            <person name="Turner R."/>
            <person name="Yooseph S."/>
            <person name="Lu F."/>
            <person name="Nusskern D.R."/>
            <person name="Shue B.C."/>
            <person name="Zheng X.H."/>
            <person name="Zhong F."/>
            <person name="Delcher A.L."/>
            <person name="Huson D.H."/>
            <person name="Kravitz S.A."/>
            <person name="Mouchard L."/>
            <person name="Reinert K."/>
            <person name="Remington K.A."/>
            <person name="Clark A.G."/>
            <person name="Waterman M.S."/>
            <person name="Eichler E.E."/>
            <person name="Adams M.D."/>
            <person name="Hunkapiller M.W."/>
            <person name="Myers E.W."/>
            <person name="Venter J.C."/>
        </authorList>
    </citation>
    <scope>NUCLEOTIDE SEQUENCE [LARGE SCALE GENOMIC DNA]</scope>
</reference>
<reference key="4">
    <citation type="journal article" date="2004" name="Genome Res.">
        <title>The status, quality, and expansion of the NIH full-length cDNA project: the Mammalian Gene Collection (MGC).</title>
        <authorList>
            <consortium name="The MGC Project Team"/>
        </authorList>
    </citation>
    <scope>NUCLEOTIDE SEQUENCE [LARGE SCALE MRNA] (ISOFORM 2)</scope>
    <source>
        <tissue>Brain</tissue>
    </source>
</reference>
<reference key="5">
    <citation type="journal article" date="2009" name="Sci. Signal.">
        <title>Quantitative phosphoproteomic analysis of T cell receptor signaling reveals system-wide modulation of protein-protein interactions.</title>
        <authorList>
            <person name="Mayya V."/>
            <person name="Lundgren D.H."/>
            <person name="Hwang S.-I."/>
            <person name="Rezaul K."/>
            <person name="Wu L."/>
            <person name="Eng J.K."/>
            <person name="Rodionov V."/>
            <person name="Han D.K."/>
        </authorList>
    </citation>
    <scope>IDENTIFICATION BY MASS SPECTROMETRY [LARGE SCALE ANALYSIS]</scope>
    <source>
        <tissue>Leukemic T-cell</tissue>
    </source>
</reference>
<reference key="6">
    <citation type="journal article" date="2010" name="Sci. Signal.">
        <title>Quantitative phosphoproteomics reveals widespread full phosphorylation site occupancy during mitosis.</title>
        <authorList>
            <person name="Olsen J.V."/>
            <person name="Vermeulen M."/>
            <person name="Santamaria A."/>
            <person name="Kumar C."/>
            <person name="Miller M.L."/>
            <person name="Jensen L.J."/>
            <person name="Gnad F."/>
            <person name="Cox J."/>
            <person name="Jensen T.S."/>
            <person name="Nigg E.A."/>
            <person name="Brunak S."/>
            <person name="Mann M."/>
        </authorList>
    </citation>
    <scope>IDENTIFICATION BY MASS SPECTROMETRY [LARGE SCALE ANALYSIS]</scope>
    <source>
        <tissue>Cervix carcinoma</tissue>
    </source>
</reference>
<reference key="7">
    <citation type="journal article" date="2012" name="J. Cell Biol.">
        <title>PtdIns4P synthesis by PI4KIIIalpha at the plasma membrane and its impact on plasma membrane identity.</title>
        <authorList>
            <person name="Nakatsu F."/>
            <person name="Baskin J.M."/>
            <person name="Chung J."/>
            <person name="Tanner L.B."/>
            <person name="Shui G."/>
            <person name="Lee S.Y."/>
            <person name="Pirruccello M."/>
            <person name="Hao M."/>
            <person name="Ingolia N.T."/>
            <person name="Wenk M.R."/>
            <person name="De Camilli P."/>
        </authorList>
    </citation>
    <scope>FUNCTION</scope>
    <scope>IDENTIFICATION IN THE PI4K COMPLEX</scope>
    <scope>SUBCELLULAR LOCATION</scope>
    <scope>PALMITOYLATION</scope>
    <scope>MUTAGENESIS OF 5-CYS--CYS-8</scope>
</reference>
<reference key="8">
    <citation type="journal article" date="2015" name="EMBO Rep.">
        <title>Plasticity of PI4KIIIalpha interactions at the plasma membrane.</title>
        <authorList>
            <person name="Chung J."/>
            <person name="Nakatsu F."/>
            <person name="Baskin J.M."/>
            <person name="De Camilli P."/>
        </authorList>
    </citation>
    <scope>FUNCTION</scope>
    <scope>IDENTIFICATION IN THE PI4K COMPLEX</scope>
</reference>
<reference key="9">
    <citation type="journal article" date="2015" name="J. Cell Sci.">
        <title>EFR3s are palmitoylated plasma membrane proteins that control responsiveness to G-protein-coupled receptors.</title>
        <authorList>
            <person name="Bojjireddy N."/>
            <person name="Guzman-Hernandez M.L."/>
            <person name="Reinhard N.R."/>
            <person name="Jovic M."/>
            <person name="Balla T."/>
        </authorList>
    </citation>
    <scope>FUNCTION</scope>
    <scope>SUBCELLULAR LOCATION</scope>
    <scope>PALMITOYLATION</scope>
    <scope>MUTAGENESIS OF 5-CYS--CYS-8</scope>
</reference>
<reference key="10">
    <citation type="journal article" date="2016" name="Nat. Cell Biol.">
        <title>The leukodystrophy protein FAM126A (hyccin) regulates PtdIns(4)P synthesis at the plasma membrane.</title>
        <authorList>
            <person name="Baskin J.M."/>
            <person name="Wu X."/>
            <person name="Christiano R."/>
            <person name="Oh M.S."/>
            <person name="Schauder C.M."/>
            <person name="Gazzerro E."/>
            <person name="Messa M."/>
            <person name="Baldassari S."/>
            <person name="Assereto S."/>
            <person name="Biancheri R."/>
            <person name="Zara F."/>
            <person name="Minetti C."/>
            <person name="Raimondi A."/>
            <person name="Simons M."/>
            <person name="Walther T.C."/>
            <person name="Reinisch K.M."/>
            <person name="De Camilli P."/>
        </authorList>
    </citation>
    <scope>FUNCTION</scope>
    <scope>IDENTIFICATION IN THE PI4K COMPLEX</scope>
</reference>
<protein>
    <recommendedName>
        <fullName evidence="8">Protein EFR3 homolog B</fullName>
    </recommendedName>
</protein>
<organism>
    <name type="scientific">Homo sapiens</name>
    <name type="common">Human</name>
    <dbReference type="NCBI Taxonomy" id="9606"/>
    <lineage>
        <taxon>Eukaryota</taxon>
        <taxon>Metazoa</taxon>
        <taxon>Chordata</taxon>
        <taxon>Craniata</taxon>
        <taxon>Vertebrata</taxon>
        <taxon>Euteleostomi</taxon>
        <taxon>Mammalia</taxon>
        <taxon>Eutheria</taxon>
        <taxon>Euarchontoglires</taxon>
        <taxon>Primates</taxon>
        <taxon>Haplorrhini</taxon>
        <taxon>Catarrhini</taxon>
        <taxon>Hominidae</taxon>
        <taxon>Homo</taxon>
    </lineage>
</organism>
<feature type="chain" id="PRO_0000312295" description="Protein EFR3 homolog B">
    <location>
        <begin position="1"/>
        <end position="817"/>
    </location>
</feature>
<feature type="modified residue" description="Phosphoserine" evidence="1">
    <location>
        <position position="212"/>
    </location>
</feature>
<feature type="modified residue" description="Phosphoserine" evidence="1">
    <location>
        <position position="214"/>
    </location>
</feature>
<feature type="modified residue" description="Phosphoserine" evidence="1">
    <location>
        <position position="216"/>
    </location>
</feature>
<feature type="splice variant" id="VSP_029806" description="In isoform 2." evidence="7">
    <location>
        <begin position="1"/>
        <end position="148"/>
    </location>
</feature>
<feature type="splice variant" id="VSP_029807" description="In isoform 3." evidence="6">
    <original>RVPAEEITYETLKKAIVDSVAVEEQERERRRQVVEKFQKAPFEEIAAHCGARASLLQSKLNQIFEITIRPPPSPSGTITAAYGQPQNHSIPVYEMKFPDLCVY</original>
    <variation>VSVRATVLGQPHLL</variation>
    <location>
        <begin position="715"/>
        <end position="817"/>
    </location>
</feature>
<feature type="mutagenesis site" description="Induces localization to the cytosol." evidence="2 3">
    <original>CGCC</original>
    <variation>SGSS</variation>
    <location>
        <begin position="5"/>
        <end position="8"/>
    </location>
</feature>
<evidence type="ECO:0000250" key="1">
    <source>
        <dbReference type="UniProtKB" id="Q6ZQ18"/>
    </source>
</evidence>
<evidence type="ECO:0000269" key="2">
    <source>
    </source>
</evidence>
<evidence type="ECO:0000269" key="3">
    <source>
    </source>
</evidence>
<evidence type="ECO:0000269" key="4">
    <source>
    </source>
</evidence>
<evidence type="ECO:0000269" key="5">
    <source>
    </source>
</evidence>
<evidence type="ECO:0000303" key="6">
    <source>
    </source>
</evidence>
<evidence type="ECO:0000303" key="7">
    <source>
    </source>
</evidence>
<evidence type="ECO:0000305" key="8"/>
<evidence type="ECO:0000312" key="9">
    <source>
        <dbReference type="HGNC" id="HGNC:29155"/>
    </source>
</evidence>